<dbReference type="EMBL" id="AP006841">
    <property type="protein sequence ID" value="BAD47329.1"/>
    <property type="molecule type" value="Genomic_DNA"/>
</dbReference>
<dbReference type="RefSeq" id="WP_005784490.1">
    <property type="nucleotide sequence ID" value="NZ_UYXF01000037.1"/>
</dbReference>
<dbReference type="RefSeq" id="YP_097863.1">
    <property type="nucleotide sequence ID" value="NC_006347.1"/>
</dbReference>
<dbReference type="SMR" id="Q64YU7"/>
<dbReference type="STRING" id="295405.BF0580"/>
<dbReference type="KEGG" id="bfr:BF0580"/>
<dbReference type="PATRIC" id="fig|295405.11.peg.596"/>
<dbReference type="HOGENOM" id="CLU_077094_2_0_10"/>
<dbReference type="OrthoDB" id="9809491at2"/>
<dbReference type="Proteomes" id="UP000002197">
    <property type="component" value="Chromosome"/>
</dbReference>
<dbReference type="GO" id="GO:0005886">
    <property type="term" value="C:plasma membrane"/>
    <property type="evidence" value="ECO:0007669"/>
    <property type="project" value="UniProtKB-SubCell"/>
</dbReference>
<dbReference type="GO" id="GO:0005524">
    <property type="term" value="F:ATP binding"/>
    <property type="evidence" value="ECO:0007669"/>
    <property type="project" value="UniProtKB-UniRule"/>
</dbReference>
<dbReference type="GO" id="GO:0008556">
    <property type="term" value="F:P-type potassium transmembrane transporter activity"/>
    <property type="evidence" value="ECO:0007669"/>
    <property type="project" value="InterPro"/>
</dbReference>
<dbReference type="HAMAP" id="MF_00276">
    <property type="entry name" value="KdpC"/>
    <property type="match status" value="1"/>
</dbReference>
<dbReference type="InterPro" id="IPR003820">
    <property type="entry name" value="KdpC"/>
</dbReference>
<dbReference type="NCBIfam" id="TIGR00681">
    <property type="entry name" value="kdpC"/>
    <property type="match status" value="1"/>
</dbReference>
<dbReference type="NCBIfam" id="NF001454">
    <property type="entry name" value="PRK00315.1"/>
    <property type="match status" value="1"/>
</dbReference>
<dbReference type="NCBIfam" id="NF010606">
    <property type="entry name" value="PRK14002.1"/>
    <property type="match status" value="1"/>
</dbReference>
<dbReference type="PANTHER" id="PTHR30042">
    <property type="entry name" value="POTASSIUM-TRANSPORTING ATPASE C CHAIN"/>
    <property type="match status" value="1"/>
</dbReference>
<dbReference type="PANTHER" id="PTHR30042:SF2">
    <property type="entry name" value="POTASSIUM-TRANSPORTING ATPASE KDPC SUBUNIT"/>
    <property type="match status" value="1"/>
</dbReference>
<dbReference type="Pfam" id="PF02669">
    <property type="entry name" value="KdpC"/>
    <property type="match status" value="1"/>
</dbReference>
<dbReference type="PIRSF" id="PIRSF001296">
    <property type="entry name" value="K_ATPase_KdpC"/>
    <property type="match status" value="1"/>
</dbReference>
<reference key="1">
    <citation type="journal article" date="2004" name="Proc. Natl. Acad. Sci. U.S.A.">
        <title>Genomic analysis of Bacteroides fragilis reveals extensive DNA inversions regulating cell surface adaptation.</title>
        <authorList>
            <person name="Kuwahara T."/>
            <person name="Yamashita A."/>
            <person name="Hirakawa H."/>
            <person name="Nakayama H."/>
            <person name="Toh H."/>
            <person name="Okada N."/>
            <person name="Kuhara S."/>
            <person name="Hattori M."/>
            <person name="Hayashi T."/>
            <person name="Ohnishi Y."/>
        </authorList>
    </citation>
    <scope>NUCLEOTIDE SEQUENCE [LARGE SCALE GENOMIC DNA]</scope>
    <source>
        <strain>YCH46</strain>
    </source>
</reference>
<keyword id="KW-0067">ATP-binding</keyword>
<keyword id="KW-0997">Cell inner membrane</keyword>
<keyword id="KW-1003">Cell membrane</keyword>
<keyword id="KW-0406">Ion transport</keyword>
<keyword id="KW-0472">Membrane</keyword>
<keyword id="KW-0547">Nucleotide-binding</keyword>
<keyword id="KW-0630">Potassium</keyword>
<keyword id="KW-0633">Potassium transport</keyword>
<keyword id="KW-0812">Transmembrane</keyword>
<keyword id="KW-1133">Transmembrane helix</keyword>
<keyword id="KW-0813">Transport</keyword>
<evidence type="ECO:0000255" key="1">
    <source>
        <dbReference type="HAMAP-Rule" id="MF_00276"/>
    </source>
</evidence>
<sequence length="191" mass="20935">MKTLLKSIKITLVFCVFFSVFYILVLWLFAQVAGPNRGNAEVVTLNGKVVGAANVGQTFTEEKYFWGRPSCAGDGYDATSSAGSNKGPTNPEYLAEVEARIDTFLIHHPYLARKDVPAEMVTASASGLDPDITPQSAYVQVKRVAQARGMDVEEVRRVVDKAVEKPLLGIFGTEKVNVLKLNIALEELKNR</sequence>
<accession>Q64YU7</accession>
<feature type="chain" id="PRO_1000022261" description="Potassium-transporting ATPase KdpC subunit">
    <location>
        <begin position="1"/>
        <end position="191"/>
    </location>
</feature>
<feature type="transmembrane region" description="Helical" evidence="1">
    <location>
        <begin position="10"/>
        <end position="30"/>
    </location>
</feature>
<proteinExistence type="inferred from homology"/>
<gene>
    <name evidence="1" type="primary">kdpC</name>
    <name type="ordered locus">BF0580</name>
</gene>
<organism>
    <name type="scientific">Bacteroides fragilis (strain YCH46)</name>
    <dbReference type="NCBI Taxonomy" id="295405"/>
    <lineage>
        <taxon>Bacteria</taxon>
        <taxon>Pseudomonadati</taxon>
        <taxon>Bacteroidota</taxon>
        <taxon>Bacteroidia</taxon>
        <taxon>Bacteroidales</taxon>
        <taxon>Bacteroidaceae</taxon>
        <taxon>Bacteroides</taxon>
    </lineage>
</organism>
<comment type="function">
    <text evidence="1">Part of the high-affinity ATP-driven potassium transport (or Kdp) system, which catalyzes the hydrolysis of ATP coupled with the electrogenic transport of potassium into the cytoplasm. This subunit acts as a catalytic chaperone that increases the ATP-binding affinity of the ATP-hydrolyzing subunit KdpB by the formation of a transient KdpB/KdpC/ATP ternary complex.</text>
</comment>
<comment type="subunit">
    <text evidence="1">The system is composed of three essential subunits: KdpA, KdpB and KdpC.</text>
</comment>
<comment type="subcellular location">
    <subcellularLocation>
        <location evidence="1">Cell inner membrane</location>
        <topology evidence="1">Single-pass membrane protein</topology>
    </subcellularLocation>
</comment>
<comment type="similarity">
    <text evidence="1">Belongs to the KdpC family.</text>
</comment>
<name>KDPC_BACFR</name>
<protein>
    <recommendedName>
        <fullName evidence="1">Potassium-transporting ATPase KdpC subunit</fullName>
    </recommendedName>
    <alternativeName>
        <fullName evidence="1">ATP phosphohydrolase [potassium-transporting] C chain</fullName>
    </alternativeName>
    <alternativeName>
        <fullName evidence="1">Potassium-binding and translocating subunit C</fullName>
    </alternativeName>
    <alternativeName>
        <fullName evidence="1">Potassium-translocating ATPase C chain</fullName>
    </alternativeName>
</protein>